<organismHost>
    <name type="scientific">Thermoproteus tenax</name>
    <dbReference type="NCBI Taxonomy" id="2271"/>
</organismHost>
<accession>P19290</accession>
<organism>
    <name type="scientific">Thermoproteus tenax virus 1 (strain KRA1)</name>
    <name type="common">TTV1</name>
    <dbReference type="NCBI Taxonomy" id="10480"/>
    <lineage>
        <taxon>Viruses</taxon>
        <taxon>Adnaviria</taxon>
        <taxon>Zilligvirae</taxon>
        <taxon>Taleaviricota</taxon>
        <taxon>Tokiviricetes</taxon>
        <taxon>Primavirales</taxon>
        <taxon>Tristromaviridae</taxon>
        <taxon>Betatristromavirus</taxon>
        <taxon>Betatristromavirus TTV1</taxon>
    </lineage>
</organism>
<proteinExistence type="predicted"/>
<feature type="chain" id="PRO_0000222972" description="Uncharacterized 6.7 kDa protein">
    <location>
        <begin position="1"/>
        <end position="55"/>
    </location>
</feature>
<sequence>MLRLSRLDMRWPRRDTLNTTTSAWPRYTLIDLSLRLSVADCREIWREGLESMWQK</sequence>
<protein>
    <recommendedName>
        <fullName>Uncharacterized 6.7 kDa protein</fullName>
    </recommendedName>
</protein>
<dbReference type="EMBL" id="X14855">
    <property type="protein sequence ID" value="CAA32984.1"/>
    <property type="molecule type" value="Genomic_DNA"/>
</dbReference>
<dbReference type="Proteomes" id="UP000009250">
    <property type="component" value="Genome"/>
</dbReference>
<reference key="1">
    <citation type="submission" date="1989-03" db="EMBL/GenBank/DDBJ databases">
        <authorList>
            <person name="Neumann H."/>
        </authorList>
    </citation>
    <scope>NUCLEOTIDE SEQUENCE [GENOMIC DNA]</scope>
</reference>
<name>YORF_TTV1K</name>
<keyword id="KW-1185">Reference proteome</keyword>